<comment type="function">
    <text evidence="1">Catalyzes the initial step of the lipid cycle reactions in the biosynthesis of the cell wall peptidoglycan: transfers peptidoglycan precursor phospho-MurNAc-pentapeptide from UDP-MurNAc-pentapeptide onto the lipid carrier undecaprenyl phosphate, yielding undecaprenyl-pyrophosphoryl-MurNAc-pentapeptide, known as lipid I.</text>
</comment>
<comment type="catalytic activity">
    <reaction evidence="1">
        <text>UDP-N-acetyl-alpha-D-muramoyl-L-alanyl-gamma-D-glutamyl-meso-2,6-diaminopimeloyl-D-alanyl-D-alanine + di-trans,octa-cis-undecaprenyl phosphate = di-trans,octa-cis-undecaprenyl diphospho-N-acetyl-alpha-D-muramoyl-L-alanyl-D-glutamyl-meso-2,6-diaminopimeloyl-D-alanyl-D-alanine + UMP</text>
        <dbReference type="Rhea" id="RHEA:28386"/>
        <dbReference type="ChEBI" id="CHEBI:57865"/>
        <dbReference type="ChEBI" id="CHEBI:60392"/>
        <dbReference type="ChEBI" id="CHEBI:61386"/>
        <dbReference type="ChEBI" id="CHEBI:61387"/>
        <dbReference type="EC" id="2.7.8.13"/>
    </reaction>
</comment>
<comment type="cofactor">
    <cofactor evidence="1">
        <name>Mg(2+)</name>
        <dbReference type="ChEBI" id="CHEBI:18420"/>
    </cofactor>
</comment>
<comment type="pathway">
    <text evidence="1">Cell wall biogenesis; peptidoglycan biosynthesis.</text>
</comment>
<comment type="subcellular location">
    <subcellularLocation>
        <location evidence="1">Cell membrane</location>
        <topology evidence="1">Multi-pass membrane protein</topology>
    </subcellularLocation>
</comment>
<comment type="similarity">
    <text evidence="1">Belongs to the glycosyltransferase 4 family. MraY subfamily.</text>
</comment>
<feature type="chain" id="PRO_1000002935" description="Phospho-N-acetylmuramoyl-pentapeptide-transferase">
    <location>
        <begin position="1"/>
        <end position="369"/>
    </location>
</feature>
<feature type="transmembrane region" description="Helical" evidence="1">
    <location>
        <begin position="2"/>
        <end position="22"/>
    </location>
</feature>
<feature type="transmembrane region" description="Helical" evidence="1">
    <location>
        <begin position="55"/>
        <end position="75"/>
    </location>
</feature>
<feature type="transmembrane region" description="Helical" evidence="1">
    <location>
        <begin position="86"/>
        <end position="106"/>
    </location>
</feature>
<feature type="transmembrane region" description="Helical" evidence="1">
    <location>
        <begin position="122"/>
        <end position="142"/>
    </location>
</feature>
<feature type="transmembrane region" description="Helical" evidence="1">
    <location>
        <begin position="158"/>
        <end position="178"/>
    </location>
</feature>
<feature type="transmembrane region" description="Helical" evidence="1">
    <location>
        <begin position="196"/>
        <end position="216"/>
    </location>
</feature>
<feature type="transmembrane region" description="Helical" evidence="1">
    <location>
        <begin position="239"/>
        <end position="259"/>
    </location>
</feature>
<feature type="transmembrane region" description="Helical" evidence="1">
    <location>
        <begin position="266"/>
        <end position="286"/>
    </location>
</feature>
<feature type="transmembrane region" description="Helical" evidence="1">
    <location>
        <begin position="291"/>
        <end position="311"/>
    </location>
</feature>
<feature type="transmembrane region" description="Helical" evidence="1">
    <location>
        <begin position="348"/>
        <end position="368"/>
    </location>
</feature>
<accession>A0JV91</accession>
<name>MRAY_ARTS2</name>
<organism>
    <name type="scientific">Arthrobacter sp. (strain FB24)</name>
    <dbReference type="NCBI Taxonomy" id="290399"/>
    <lineage>
        <taxon>Bacteria</taxon>
        <taxon>Bacillati</taxon>
        <taxon>Actinomycetota</taxon>
        <taxon>Actinomycetes</taxon>
        <taxon>Micrococcales</taxon>
        <taxon>Micrococcaceae</taxon>
        <taxon>Arthrobacter</taxon>
    </lineage>
</organism>
<protein>
    <recommendedName>
        <fullName evidence="1">Phospho-N-acetylmuramoyl-pentapeptide-transferase</fullName>
        <ecNumber evidence="1">2.7.8.13</ecNumber>
    </recommendedName>
    <alternativeName>
        <fullName evidence="1">UDP-MurNAc-pentapeptide phosphotransferase</fullName>
    </alternativeName>
</protein>
<proteinExistence type="inferred from homology"/>
<keyword id="KW-0131">Cell cycle</keyword>
<keyword id="KW-0132">Cell division</keyword>
<keyword id="KW-1003">Cell membrane</keyword>
<keyword id="KW-0133">Cell shape</keyword>
<keyword id="KW-0961">Cell wall biogenesis/degradation</keyword>
<keyword id="KW-0460">Magnesium</keyword>
<keyword id="KW-0472">Membrane</keyword>
<keyword id="KW-0479">Metal-binding</keyword>
<keyword id="KW-0573">Peptidoglycan synthesis</keyword>
<keyword id="KW-1185">Reference proteome</keyword>
<keyword id="KW-0808">Transferase</keyword>
<keyword id="KW-0812">Transmembrane</keyword>
<keyword id="KW-1133">Transmembrane helix</keyword>
<evidence type="ECO:0000255" key="1">
    <source>
        <dbReference type="HAMAP-Rule" id="MF_00038"/>
    </source>
</evidence>
<sequence length="369" mass="39203">MIALLIGAGLALLFALVGTPLFIRLLVRKSYGQFIRDDGPTSHHTKRGTPTMGGTVVVFAVLLSYALTHLIMWMMNPRSPGPSASALLLLFLMVGMGLVGFLDDFIKISKQRSLGLDAKAKLVLQGAVGIIFAILALNFPNADGVTPASTQISLVRDIPWLNLAFGGTVLGAILFVLWSNLIVTAATNGVNLTDGLDGLAAGASVMVFGAYTLMGIWQSNQACGSPRQTGGGCYSVRDPLDLALLAAILSAALVGFLWWNTSPAKIFMGDTGSLAIGGAVAGFAILSRTELLLAFIGGLFVLITLSVIIQVGYFKITKGKRFFKMAPLQHHFELKGWAEVTVVVRFWILGGLFVAAGLGIFYAEWVVLL</sequence>
<reference key="1">
    <citation type="journal article" date="2013" name="Stand. Genomic Sci.">
        <title>Complete genome sequence of Arthrobacter sp. strain FB24.</title>
        <authorList>
            <person name="Nakatsu C.H."/>
            <person name="Barabote R."/>
            <person name="Thompson S."/>
            <person name="Bruce D."/>
            <person name="Detter C."/>
            <person name="Brettin T."/>
            <person name="Han C."/>
            <person name="Beasley F."/>
            <person name="Chen W."/>
            <person name="Konopka A."/>
            <person name="Xie G."/>
        </authorList>
    </citation>
    <scope>NUCLEOTIDE SEQUENCE [LARGE SCALE GENOMIC DNA]</scope>
    <source>
        <strain>FB24</strain>
    </source>
</reference>
<gene>
    <name evidence="1" type="primary">mraY</name>
    <name type="ordered locus">Arth_1567</name>
</gene>
<dbReference type="EC" id="2.7.8.13" evidence="1"/>
<dbReference type="EMBL" id="CP000454">
    <property type="protein sequence ID" value="ABK02961.1"/>
    <property type="molecule type" value="Genomic_DNA"/>
</dbReference>
<dbReference type="RefSeq" id="WP_011691427.1">
    <property type="nucleotide sequence ID" value="NC_008541.1"/>
</dbReference>
<dbReference type="SMR" id="A0JV91"/>
<dbReference type="STRING" id="290399.Arth_1567"/>
<dbReference type="KEGG" id="art:Arth_1567"/>
<dbReference type="eggNOG" id="COG0472">
    <property type="taxonomic scope" value="Bacteria"/>
</dbReference>
<dbReference type="HOGENOM" id="CLU_023982_0_1_11"/>
<dbReference type="OrthoDB" id="9805475at2"/>
<dbReference type="UniPathway" id="UPA00219"/>
<dbReference type="Proteomes" id="UP000000754">
    <property type="component" value="Chromosome"/>
</dbReference>
<dbReference type="GO" id="GO:0005886">
    <property type="term" value="C:plasma membrane"/>
    <property type="evidence" value="ECO:0007669"/>
    <property type="project" value="UniProtKB-SubCell"/>
</dbReference>
<dbReference type="GO" id="GO:0046872">
    <property type="term" value="F:metal ion binding"/>
    <property type="evidence" value="ECO:0007669"/>
    <property type="project" value="UniProtKB-KW"/>
</dbReference>
<dbReference type="GO" id="GO:0008963">
    <property type="term" value="F:phospho-N-acetylmuramoyl-pentapeptide-transferase activity"/>
    <property type="evidence" value="ECO:0007669"/>
    <property type="project" value="UniProtKB-UniRule"/>
</dbReference>
<dbReference type="GO" id="GO:0051992">
    <property type="term" value="F:UDP-N-acetylmuramoyl-L-alanyl-D-glutamyl-meso-2,6-diaminopimelyl-D-alanyl-D-alanine:undecaprenyl-phosphate transferase activity"/>
    <property type="evidence" value="ECO:0007669"/>
    <property type="project" value="RHEA"/>
</dbReference>
<dbReference type="GO" id="GO:0051301">
    <property type="term" value="P:cell division"/>
    <property type="evidence" value="ECO:0007669"/>
    <property type="project" value="UniProtKB-KW"/>
</dbReference>
<dbReference type="GO" id="GO:0071555">
    <property type="term" value="P:cell wall organization"/>
    <property type="evidence" value="ECO:0007669"/>
    <property type="project" value="UniProtKB-KW"/>
</dbReference>
<dbReference type="GO" id="GO:0009252">
    <property type="term" value="P:peptidoglycan biosynthetic process"/>
    <property type="evidence" value="ECO:0007669"/>
    <property type="project" value="UniProtKB-UniRule"/>
</dbReference>
<dbReference type="GO" id="GO:0008360">
    <property type="term" value="P:regulation of cell shape"/>
    <property type="evidence" value="ECO:0007669"/>
    <property type="project" value="UniProtKB-KW"/>
</dbReference>
<dbReference type="CDD" id="cd06852">
    <property type="entry name" value="GT_MraY"/>
    <property type="match status" value="1"/>
</dbReference>
<dbReference type="HAMAP" id="MF_00038">
    <property type="entry name" value="MraY"/>
    <property type="match status" value="1"/>
</dbReference>
<dbReference type="InterPro" id="IPR000715">
    <property type="entry name" value="Glycosyl_transferase_4"/>
</dbReference>
<dbReference type="InterPro" id="IPR003524">
    <property type="entry name" value="PNAcMuramoyl-5peptid_Trfase"/>
</dbReference>
<dbReference type="InterPro" id="IPR018480">
    <property type="entry name" value="PNAcMuramoyl-5peptid_Trfase_CS"/>
</dbReference>
<dbReference type="NCBIfam" id="TIGR00445">
    <property type="entry name" value="mraY"/>
    <property type="match status" value="1"/>
</dbReference>
<dbReference type="PANTHER" id="PTHR22926">
    <property type="entry name" value="PHOSPHO-N-ACETYLMURAMOYL-PENTAPEPTIDE-TRANSFERASE"/>
    <property type="match status" value="1"/>
</dbReference>
<dbReference type="PANTHER" id="PTHR22926:SF5">
    <property type="entry name" value="PHOSPHO-N-ACETYLMURAMOYL-PENTAPEPTIDE-TRANSFERASE HOMOLOG"/>
    <property type="match status" value="1"/>
</dbReference>
<dbReference type="Pfam" id="PF00953">
    <property type="entry name" value="Glycos_transf_4"/>
    <property type="match status" value="1"/>
</dbReference>
<dbReference type="Pfam" id="PF10555">
    <property type="entry name" value="MraY_sig1"/>
    <property type="match status" value="1"/>
</dbReference>
<dbReference type="PROSITE" id="PS01348">
    <property type="entry name" value="MRAY_2"/>
    <property type="match status" value="1"/>
</dbReference>